<dbReference type="SMR" id="P84563"/>
<dbReference type="Proteomes" id="UP000694918">
    <property type="component" value="Unplaced"/>
</dbReference>
<dbReference type="GO" id="GO:0009535">
    <property type="term" value="C:chloroplast thylakoid membrane"/>
    <property type="evidence" value="ECO:0007669"/>
    <property type="project" value="UniProtKB-SubCell"/>
</dbReference>
<dbReference type="GO" id="GO:0009538">
    <property type="term" value="C:photosystem I reaction center"/>
    <property type="evidence" value="ECO:0007669"/>
    <property type="project" value="InterPro"/>
</dbReference>
<dbReference type="GO" id="GO:0015979">
    <property type="term" value="P:photosynthesis"/>
    <property type="evidence" value="ECO:0007669"/>
    <property type="project" value="UniProtKB-KW"/>
</dbReference>
<dbReference type="Gene3D" id="3.30.1470.10">
    <property type="entry name" value="Photosystem I PsaD, reaction center subunit II"/>
    <property type="match status" value="1"/>
</dbReference>
<dbReference type="InterPro" id="IPR003685">
    <property type="entry name" value="PsaD"/>
</dbReference>
<dbReference type="PANTHER" id="PTHR31982:SF5">
    <property type="entry name" value="PHOTOSYSTEM I REACTION CENTER SUBUNIT II, CHLOROPLASTIC"/>
    <property type="match status" value="1"/>
</dbReference>
<dbReference type="PANTHER" id="PTHR31982">
    <property type="entry name" value="PHOTOSYSTEM I REACTION CENTER SUBUNIT II-1, CHLOROPLASTIC-RELATED"/>
    <property type="match status" value="1"/>
</dbReference>
<name>PSAD_POPEU</name>
<organism>
    <name type="scientific">Populus euphratica</name>
    <name type="common">Euphrates poplar</name>
    <dbReference type="NCBI Taxonomy" id="75702"/>
    <lineage>
        <taxon>Eukaryota</taxon>
        <taxon>Viridiplantae</taxon>
        <taxon>Streptophyta</taxon>
        <taxon>Embryophyta</taxon>
        <taxon>Tracheophyta</taxon>
        <taxon>Spermatophyta</taxon>
        <taxon>Magnoliopsida</taxon>
        <taxon>eudicotyledons</taxon>
        <taxon>Gunneridae</taxon>
        <taxon>Pentapetalae</taxon>
        <taxon>rosids</taxon>
        <taxon>fabids</taxon>
        <taxon>Malpighiales</taxon>
        <taxon>Salicaceae</taxon>
        <taxon>Saliceae</taxon>
        <taxon>Populus</taxon>
    </lineage>
</organism>
<evidence type="ECO:0000250" key="1"/>
<evidence type="ECO:0000256" key="2">
    <source>
        <dbReference type="SAM" id="MobiDB-lite"/>
    </source>
</evidence>
<evidence type="ECO:0000305" key="3"/>
<gene>
    <name type="primary">psaD</name>
</gene>
<sequence length="29" mass="2897">EAPVGFTPPELDPSTPSPIFGGSTGGLLR</sequence>
<reference key="1">
    <citation type="journal article" date="2006" name="Ann. Bot.">
        <title>Proteome profiling of Populus euphratica Oliv. upon heat stress.</title>
        <authorList>
            <person name="Ferreira S."/>
            <person name="Hjernoe K."/>
            <person name="Larsen M."/>
            <person name="Wingsle G."/>
            <person name="Larsen P."/>
            <person name="Fey S."/>
            <person name="Roepstorff P."/>
            <person name="Pais M.S."/>
        </authorList>
    </citation>
    <scope>PROTEIN SEQUENCE</scope>
    <source>
        <tissue>Leaf</tissue>
    </source>
</reference>
<feature type="chain" id="PRO_0000206059" description="Photosystem I reaction center subunit II">
    <location>
        <begin position="1" status="less than"/>
        <end position="29" status="greater than"/>
    </location>
</feature>
<feature type="region of interest" description="Disordered" evidence="2">
    <location>
        <begin position="1"/>
        <end position="29"/>
    </location>
</feature>
<feature type="non-terminal residue">
    <location>
        <position position="1"/>
    </location>
</feature>
<feature type="non-terminal residue">
    <location>
        <position position="29"/>
    </location>
</feature>
<proteinExistence type="evidence at protein level"/>
<protein>
    <recommendedName>
        <fullName>Photosystem I reaction center subunit II</fullName>
    </recommendedName>
    <alternativeName>
        <fullName>Photosystem I 20 kDa subunit</fullName>
        <shortName>PSI-D</shortName>
    </alternativeName>
</protein>
<accession>P84563</accession>
<keyword id="KW-0150">Chloroplast</keyword>
<keyword id="KW-0903">Direct protein sequencing</keyword>
<keyword id="KW-0472">Membrane</keyword>
<keyword id="KW-0602">Photosynthesis</keyword>
<keyword id="KW-0603">Photosystem I</keyword>
<keyword id="KW-0934">Plastid</keyword>
<keyword id="KW-1185">Reference proteome</keyword>
<keyword id="KW-0793">Thylakoid</keyword>
<comment type="function">
    <text evidence="3">PsaD can form complexes with ferredoxin and ferredoxin-oxidoreductase in photosystem I (PS I) reaction center. PSAD may encode the ferredoxin-docking protein.</text>
</comment>
<comment type="subcellular location">
    <subcellularLocation>
        <location evidence="1">Plastid</location>
        <location evidence="1">Chloroplast thylakoid membrane</location>
        <topology evidence="1">Peripheral membrane protein</topology>
        <orientation evidence="1">Stromal side</orientation>
    </subcellularLocation>
</comment>
<comment type="similarity">
    <text evidence="3">Belongs to the PsaD family.</text>
</comment>